<dbReference type="EC" id="4.1.99.2"/>
<dbReference type="EMBL" id="U83917">
    <property type="protein sequence ID" value="AAB41499.1"/>
    <property type="molecule type" value="Genomic_DNA"/>
</dbReference>
<dbReference type="SMR" id="O08501"/>
<dbReference type="GO" id="GO:0050371">
    <property type="term" value="F:tyrosine phenol-lyase activity"/>
    <property type="evidence" value="ECO:0007669"/>
    <property type="project" value="UniProtKB-UniRule"/>
</dbReference>
<dbReference type="GO" id="GO:0006570">
    <property type="term" value="P:tyrosine metabolic process"/>
    <property type="evidence" value="ECO:0007669"/>
    <property type="project" value="InterPro"/>
</dbReference>
<dbReference type="CDD" id="cd00617">
    <property type="entry name" value="Tnase_like"/>
    <property type="match status" value="1"/>
</dbReference>
<dbReference type="Gene3D" id="3.90.1150.10">
    <property type="entry name" value="Aspartate Aminotransferase, domain 1"/>
    <property type="match status" value="1"/>
</dbReference>
<dbReference type="Gene3D" id="3.40.640.10">
    <property type="entry name" value="Type I PLP-dependent aspartate aminotransferase-like (Major domain)"/>
    <property type="match status" value="1"/>
</dbReference>
<dbReference type="HAMAP" id="MF_00543">
    <property type="entry name" value="Tyr_phenol_lyase"/>
    <property type="match status" value="1"/>
</dbReference>
<dbReference type="InterPro" id="IPR001597">
    <property type="entry name" value="ArAA_b-elim_lyase/Thr_aldolase"/>
</dbReference>
<dbReference type="InterPro" id="IPR011166">
    <property type="entry name" value="Beta-eliminating_lyase"/>
</dbReference>
<dbReference type="InterPro" id="IPR015424">
    <property type="entry name" value="PyrdxlP-dep_Trfase"/>
</dbReference>
<dbReference type="InterPro" id="IPR015421">
    <property type="entry name" value="PyrdxlP-dep_Trfase_major"/>
</dbReference>
<dbReference type="InterPro" id="IPR015422">
    <property type="entry name" value="PyrdxlP-dep_Trfase_small"/>
</dbReference>
<dbReference type="InterPro" id="IPR018176">
    <property type="entry name" value="Tryptophanase_CS"/>
</dbReference>
<dbReference type="InterPro" id="IPR013441">
    <property type="entry name" value="Tyr_phenol_ly"/>
</dbReference>
<dbReference type="NCBIfam" id="NF009709">
    <property type="entry name" value="PRK13238.1"/>
    <property type="match status" value="1"/>
</dbReference>
<dbReference type="NCBIfam" id="TIGR02618">
    <property type="entry name" value="tyr_phenol_ly"/>
    <property type="match status" value="1"/>
</dbReference>
<dbReference type="PANTHER" id="PTHR32325">
    <property type="entry name" value="BETA-ELIMINATING LYASE-LIKE PROTEIN-RELATED"/>
    <property type="match status" value="1"/>
</dbReference>
<dbReference type="PANTHER" id="PTHR32325:SF4">
    <property type="entry name" value="TRYPTOPHANASE"/>
    <property type="match status" value="1"/>
</dbReference>
<dbReference type="Pfam" id="PF01212">
    <property type="entry name" value="Beta_elim_lyase"/>
    <property type="match status" value="1"/>
</dbReference>
<dbReference type="PIRSF" id="PIRSF001386">
    <property type="entry name" value="Trpase"/>
    <property type="match status" value="1"/>
</dbReference>
<dbReference type="SUPFAM" id="SSF53383">
    <property type="entry name" value="PLP-dependent transferases"/>
    <property type="match status" value="1"/>
</dbReference>
<dbReference type="PROSITE" id="PS00853">
    <property type="entry name" value="BETA_ELIM_LYASE"/>
    <property type="match status" value="1"/>
</dbReference>
<protein>
    <recommendedName>
        <fullName>Tyrosine phenol-lyase</fullName>
        <ecNumber>4.1.99.2</ecNumber>
    </recommendedName>
    <alternativeName>
        <fullName>Beta-tyrosinase</fullName>
    </alternativeName>
</protein>
<comment type="catalytic activity">
    <reaction>
        <text>L-tyrosine + H2O = phenol + pyruvate + NH4(+)</text>
        <dbReference type="Rhea" id="RHEA:21704"/>
        <dbReference type="ChEBI" id="CHEBI:15361"/>
        <dbReference type="ChEBI" id="CHEBI:15377"/>
        <dbReference type="ChEBI" id="CHEBI:15882"/>
        <dbReference type="ChEBI" id="CHEBI:28938"/>
        <dbReference type="ChEBI" id="CHEBI:58315"/>
        <dbReference type="EC" id="4.1.99.2"/>
    </reaction>
</comment>
<comment type="cofactor">
    <cofactor evidence="1">
        <name>pyridoxal 5'-phosphate</name>
        <dbReference type="ChEBI" id="CHEBI:597326"/>
    </cofactor>
</comment>
<comment type="subunit">
    <text evidence="1">Homotetramer.</text>
</comment>
<comment type="similarity">
    <text evidence="2">Belongs to the beta-eliminating lyase family.</text>
</comment>
<feature type="chain" id="PRO_0000195637" description="Tyrosine phenol-lyase">
    <location>
        <begin position="1"/>
        <end position="458"/>
    </location>
</feature>
<feature type="modified residue" description="N6-(pyridoxal phosphate)lysine" evidence="1">
    <location>
        <position position="258"/>
    </location>
</feature>
<accession>O08501</accession>
<evidence type="ECO:0000250" key="1"/>
<evidence type="ECO:0000305" key="2"/>
<gene>
    <name type="primary">tpl</name>
</gene>
<organism>
    <name type="scientific">Symbiobacterium sp. (strain SC-1)</name>
    <dbReference type="NCBI Taxonomy" id="56197"/>
    <lineage>
        <taxon>Bacteria</taxon>
        <taxon>Bacillati</taxon>
        <taxon>Bacillota</taxon>
        <taxon>Clostridia</taxon>
        <taxon>Eubacteriales</taxon>
        <taxon>Symbiobacteriaceae</taxon>
        <taxon>Symbiobacterium</taxon>
    </lineage>
</organism>
<sequence length="458" mass="52190">MQRPWAEPYKIKAVEPIRMTTREYREQAIREAGYNTFLLRSEDVYIDLLTDSGTNAMSDRQWGALMMGDEAYAGARSFFRLEEAVREIYGFKYVVPTHQGRGAEHLISRILIKPGDYIPGNMYFTTTRTHQELQGGTFVDVIIDEAHDPQANHPFKGNVDIAKFEALIDRVGADKIPYINVALTVNMAGGQPVSMANLREVRKVCDRHGIRMWSDATRAVENAYFIKEREEGYQDKPVREILKEMMSYFDGCTMSGKKDCLVNIGGFLAMNEEWILQKAREQVVIFEGMPTYGGLAGRDMEAIAQGIYEMVDDDYIAHRIHQVRYLGEQLLEAGIPIVQPIGGHAVFLDARAFLPHIPQDQFPAQALAAALYVDSGVRAMERGIVSAGRNPQTGEHNYPKLELVRLTIPRRVYTDRHMDVVAYSVKHLWKERDTIRGLRMVYEPPTLRFFTARFEPIS</sequence>
<proteinExistence type="inferred from homology"/>
<keyword id="KW-0456">Lyase</keyword>
<keyword id="KW-0663">Pyridoxal phosphate</keyword>
<name>TPL_SYMS1</name>
<reference key="1">
    <citation type="submission" date="1997-01" db="EMBL/GenBank/DDBJ databases">
        <title>Thermostable tyrosine phenol-lyase of Symbiobacterium sp. SC-1; cloning, overproduction, and enzyme properties.</title>
        <authorList>
            <person name="Sung M.H."/>
            <person name="Hong S.P."/>
            <person name="Lee S.G."/>
        </authorList>
    </citation>
    <scope>NUCLEOTIDE SEQUENCE [GENOMIC DNA]</scope>
</reference>